<organism>
    <name type="scientific">Pseudoalteromonas translucida (strain TAC 125)</name>
    <dbReference type="NCBI Taxonomy" id="326442"/>
    <lineage>
        <taxon>Bacteria</taxon>
        <taxon>Pseudomonadati</taxon>
        <taxon>Pseudomonadota</taxon>
        <taxon>Gammaproteobacteria</taxon>
        <taxon>Alteromonadales</taxon>
        <taxon>Pseudoalteromonadaceae</taxon>
        <taxon>Pseudoalteromonas</taxon>
    </lineage>
</organism>
<protein>
    <recommendedName>
        <fullName evidence="1">Orotidine 5'-phosphate decarboxylase</fullName>
        <ecNumber evidence="1">4.1.1.23</ecNumber>
    </recommendedName>
    <alternativeName>
        <fullName evidence="1">OMP decarboxylase</fullName>
        <shortName evidence="1">OMPDCase</shortName>
        <shortName evidence="1">OMPdecase</shortName>
    </alternativeName>
</protein>
<reference key="1">
    <citation type="journal article" date="2005" name="Genome Res.">
        <title>Coping with cold: the genome of the versatile marine Antarctica bacterium Pseudoalteromonas haloplanktis TAC125.</title>
        <authorList>
            <person name="Medigue C."/>
            <person name="Krin E."/>
            <person name="Pascal G."/>
            <person name="Barbe V."/>
            <person name="Bernsel A."/>
            <person name="Bertin P.N."/>
            <person name="Cheung F."/>
            <person name="Cruveiller S."/>
            <person name="D'Amico S."/>
            <person name="Duilio A."/>
            <person name="Fang G."/>
            <person name="Feller G."/>
            <person name="Ho C."/>
            <person name="Mangenot S."/>
            <person name="Marino G."/>
            <person name="Nilsson J."/>
            <person name="Parrilli E."/>
            <person name="Rocha E.P.C."/>
            <person name="Rouy Z."/>
            <person name="Sekowska A."/>
            <person name="Tutino M.L."/>
            <person name="Vallenet D."/>
            <person name="von Heijne G."/>
            <person name="Danchin A."/>
        </authorList>
    </citation>
    <scope>NUCLEOTIDE SEQUENCE [LARGE SCALE GENOMIC DNA]</scope>
    <source>
        <strain>TAC 125</strain>
    </source>
</reference>
<feature type="chain" id="PRO_0000241888" description="Orotidine 5'-phosphate decarboxylase">
    <location>
        <begin position="1"/>
        <end position="234"/>
    </location>
</feature>
<feature type="active site" description="Proton donor" evidence="1">
    <location>
        <position position="65"/>
    </location>
</feature>
<feature type="binding site" evidence="1">
    <location>
        <position position="14"/>
    </location>
    <ligand>
        <name>substrate</name>
    </ligand>
</feature>
<feature type="binding site" evidence="1">
    <location>
        <position position="36"/>
    </location>
    <ligand>
        <name>substrate</name>
    </ligand>
</feature>
<feature type="binding site" evidence="1">
    <location>
        <begin position="63"/>
        <end position="72"/>
    </location>
    <ligand>
        <name>substrate</name>
    </ligand>
</feature>
<feature type="binding site" evidence="1">
    <location>
        <position position="123"/>
    </location>
    <ligand>
        <name>substrate</name>
    </ligand>
</feature>
<feature type="binding site" evidence="1">
    <location>
        <position position="184"/>
    </location>
    <ligand>
        <name>substrate</name>
    </ligand>
</feature>
<feature type="binding site" evidence="1">
    <location>
        <position position="193"/>
    </location>
    <ligand>
        <name>substrate</name>
    </ligand>
</feature>
<feature type="binding site" evidence="1">
    <location>
        <position position="213"/>
    </location>
    <ligand>
        <name>substrate</name>
    </ligand>
</feature>
<feature type="binding site" evidence="1">
    <location>
        <position position="214"/>
    </location>
    <ligand>
        <name>substrate</name>
    </ligand>
</feature>
<accession>Q3IGA7</accession>
<name>PYRF_PSET1</name>
<proteinExistence type="inferred from homology"/>
<dbReference type="EC" id="4.1.1.23" evidence="1"/>
<dbReference type="EMBL" id="CR954246">
    <property type="protein sequence ID" value="CAI86504.1"/>
    <property type="molecule type" value="Genomic_DNA"/>
</dbReference>
<dbReference type="SMR" id="Q3IGA7"/>
<dbReference type="STRING" id="326442.PSHAa1429"/>
<dbReference type="KEGG" id="pha:PSHAa1429"/>
<dbReference type="PATRIC" id="fig|326442.8.peg.1384"/>
<dbReference type="eggNOG" id="COG0284">
    <property type="taxonomic scope" value="Bacteria"/>
</dbReference>
<dbReference type="HOGENOM" id="CLU_067069_0_0_6"/>
<dbReference type="BioCyc" id="PHAL326442:PSHA_RS07035-MONOMER"/>
<dbReference type="UniPathway" id="UPA00070">
    <property type="reaction ID" value="UER00120"/>
</dbReference>
<dbReference type="Proteomes" id="UP000006843">
    <property type="component" value="Chromosome I"/>
</dbReference>
<dbReference type="GO" id="GO:0005829">
    <property type="term" value="C:cytosol"/>
    <property type="evidence" value="ECO:0007669"/>
    <property type="project" value="TreeGrafter"/>
</dbReference>
<dbReference type="GO" id="GO:0004590">
    <property type="term" value="F:orotidine-5'-phosphate decarboxylase activity"/>
    <property type="evidence" value="ECO:0007669"/>
    <property type="project" value="UniProtKB-UniRule"/>
</dbReference>
<dbReference type="GO" id="GO:0006207">
    <property type="term" value="P:'de novo' pyrimidine nucleobase biosynthetic process"/>
    <property type="evidence" value="ECO:0007669"/>
    <property type="project" value="InterPro"/>
</dbReference>
<dbReference type="GO" id="GO:0044205">
    <property type="term" value="P:'de novo' UMP biosynthetic process"/>
    <property type="evidence" value="ECO:0007669"/>
    <property type="project" value="UniProtKB-UniRule"/>
</dbReference>
<dbReference type="CDD" id="cd04725">
    <property type="entry name" value="OMP_decarboxylase_like"/>
    <property type="match status" value="1"/>
</dbReference>
<dbReference type="FunFam" id="3.20.20.70:FF:000015">
    <property type="entry name" value="Orotidine 5'-phosphate decarboxylase"/>
    <property type="match status" value="1"/>
</dbReference>
<dbReference type="Gene3D" id="3.20.20.70">
    <property type="entry name" value="Aldolase class I"/>
    <property type="match status" value="1"/>
</dbReference>
<dbReference type="HAMAP" id="MF_01200_B">
    <property type="entry name" value="OMPdecase_type1_B"/>
    <property type="match status" value="1"/>
</dbReference>
<dbReference type="InterPro" id="IPR013785">
    <property type="entry name" value="Aldolase_TIM"/>
</dbReference>
<dbReference type="InterPro" id="IPR014732">
    <property type="entry name" value="OMPdecase"/>
</dbReference>
<dbReference type="InterPro" id="IPR018089">
    <property type="entry name" value="OMPdecase_AS"/>
</dbReference>
<dbReference type="InterPro" id="IPR047596">
    <property type="entry name" value="OMPdecase_bac"/>
</dbReference>
<dbReference type="InterPro" id="IPR001754">
    <property type="entry name" value="OMPdeCOase_dom"/>
</dbReference>
<dbReference type="InterPro" id="IPR011060">
    <property type="entry name" value="RibuloseP-bd_barrel"/>
</dbReference>
<dbReference type="NCBIfam" id="NF001273">
    <property type="entry name" value="PRK00230.1"/>
    <property type="match status" value="1"/>
</dbReference>
<dbReference type="NCBIfam" id="TIGR01740">
    <property type="entry name" value="pyrF"/>
    <property type="match status" value="1"/>
</dbReference>
<dbReference type="PANTHER" id="PTHR32119">
    <property type="entry name" value="OROTIDINE 5'-PHOSPHATE DECARBOXYLASE"/>
    <property type="match status" value="1"/>
</dbReference>
<dbReference type="PANTHER" id="PTHR32119:SF2">
    <property type="entry name" value="OROTIDINE 5'-PHOSPHATE DECARBOXYLASE"/>
    <property type="match status" value="1"/>
</dbReference>
<dbReference type="Pfam" id="PF00215">
    <property type="entry name" value="OMPdecase"/>
    <property type="match status" value="1"/>
</dbReference>
<dbReference type="SMART" id="SM00934">
    <property type="entry name" value="OMPdecase"/>
    <property type="match status" value="1"/>
</dbReference>
<dbReference type="SUPFAM" id="SSF51366">
    <property type="entry name" value="Ribulose-phoshate binding barrel"/>
    <property type="match status" value="1"/>
</dbReference>
<dbReference type="PROSITE" id="PS00156">
    <property type="entry name" value="OMPDECASE"/>
    <property type="match status" value="1"/>
</dbReference>
<comment type="function">
    <text evidence="1">Catalyzes the decarboxylation of orotidine 5'-monophosphate (OMP) to uridine 5'-monophosphate (UMP).</text>
</comment>
<comment type="catalytic activity">
    <reaction evidence="1">
        <text>orotidine 5'-phosphate + H(+) = UMP + CO2</text>
        <dbReference type="Rhea" id="RHEA:11596"/>
        <dbReference type="ChEBI" id="CHEBI:15378"/>
        <dbReference type="ChEBI" id="CHEBI:16526"/>
        <dbReference type="ChEBI" id="CHEBI:57538"/>
        <dbReference type="ChEBI" id="CHEBI:57865"/>
        <dbReference type="EC" id="4.1.1.23"/>
    </reaction>
</comment>
<comment type="pathway">
    <text evidence="1">Pyrimidine metabolism; UMP biosynthesis via de novo pathway; UMP from orotate: step 2/2.</text>
</comment>
<comment type="subunit">
    <text evidence="1">Homodimer.</text>
</comment>
<comment type="similarity">
    <text evidence="1">Belongs to the OMP decarboxylase family. Type 1 subfamily.</text>
</comment>
<evidence type="ECO:0000255" key="1">
    <source>
        <dbReference type="HAMAP-Rule" id="MF_01200"/>
    </source>
</evidence>
<sequence length="234" mass="25271">MPFEKSKKILIALDYDDQQAALDFVKQLSPDSCRLKVGKEMFTYFGPAFVKELIDLGFDVFLDLKFHDIPNTVAKAVTAAAKMGVWMVNVHASGGFEMMSKAKQALAPFGDKAPLLIAVTVLTSMDETELKRLGVEKTPQEQVIYLAKLAKEAGLDGVVCSAQEAQQLKAELGAGFKLVTPGIRPVGSDAGDQKRIMTPKQAIDAGSDYLVIGRPITQADNPVAVLADVNKSIE</sequence>
<keyword id="KW-0210">Decarboxylase</keyword>
<keyword id="KW-0456">Lyase</keyword>
<keyword id="KW-0665">Pyrimidine biosynthesis</keyword>
<keyword id="KW-1185">Reference proteome</keyword>
<gene>
    <name evidence="1" type="primary">pyrF</name>
    <name type="ordered locus">PSHAa1429</name>
</gene>